<evidence type="ECO:0000250" key="1"/>
<evidence type="ECO:0000255" key="2"/>
<evidence type="ECO:0000269" key="3">
    <source>
    </source>
</evidence>
<evidence type="ECO:0000305" key="4"/>
<organism>
    <name type="scientific">Schizosaccharomyces pombe (strain 972 / ATCC 24843)</name>
    <name type="common">Fission yeast</name>
    <dbReference type="NCBI Taxonomy" id="284812"/>
    <lineage>
        <taxon>Eukaryota</taxon>
        <taxon>Fungi</taxon>
        <taxon>Dikarya</taxon>
        <taxon>Ascomycota</taxon>
        <taxon>Taphrinomycotina</taxon>
        <taxon>Schizosaccharomycetes</taxon>
        <taxon>Schizosaccharomycetales</taxon>
        <taxon>Schizosaccharomycetaceae</taxon>
        <taxon>Schizosaccharomyces</taxon>
    </lineage>
</organism>
<gene>
    <name type="primary">pun1</name>
    <name type="synonym">sur7</name>
    <name type="ORF">SPAC15A10.09c</name>
</gene>
<proteinExistence type="inferred from homology"/>
<keyword id="KW-1003">Cell membrane</keyword>
<keyword id="KW-0325">Glycoprotein</keyword>
<keyword id="KW-0333">Golgi apparatus</keyword>
<keyword id="KW-0472">Membrane</keyword>
<keyword id="KW-1185">Reference proteome</keyword>
<keyword id="KW-0812">Transmembrane</keyword>
<keyword id="KW-1133">Transmembrane helix</keyword>
<dbReference type="EMBL" id="CU329670">
    <property type="protein sequence ID" value="CAB10106.1"/>
    <property type="molecule type" value="Genomic_DNA"/>
</dbReference>
<dbReference type="PIR" id="T37709">
    <property type="entry name" value="T37709"/>
</dbReference>
<dbReference type="RefSeq" id="NP_594296.1">
    <property type="nucleotide sequence ID" value="NM_001019719.2"/>
</dbReference>
<dbReference type="BioGRID" id="279198">
    <property type="interactions" value="13"/>
</dbReference>
<dbReference type="STRING" id="284812.O13729"/>
<dbReference type="GlyCosmos" id="O13729">
    <property type="glycosylation" value="7 sites, No reported glycans"/>
</dbReference>
<dbReference type="PaxDb" id="4896-SPAC15A10.09c.1"/>
<dbReference type="EnsemblFungi" id="SPAC15A10.09c.1">
    <property type="protein sequence ID" value="SPAC15A10.09c.1:pep"/>
    <property type="gene ID" value="SPAC15A10.09c"/>
</dbReference>
<dbReference type="GeneID" id="2542748"/>
<dbReference type="KEGG" id="spo:2542748"/>
<dbReference type="PomBase" id="SPAC15A10.09c">
    <property type="gene designation" value="pun1"/>
</dbReference>
<dbReference type="VEuPathDB" id="FungiDB:SPAC15A10.09c"/>
<dbReference type="eggNOG" id="ENOG502QRB5">
    <property type="taxonomic scope" value="Eukaryota"/>
</dbReference>
<dbReference type="HOGENOM" id="CLU_1190478_0_0_1"/>
<dbReference type="InParanoid" id="O13729"/>
<dbReference type="OMA" id="ILCIINQ"/>
<dbReference type="PhylomeDB" id="O13729"/>
<dbReference type="PRO" id="PR:O13729"/>
<dbReference type="Proteomes" id="UP000002485">
    <property type="component" value="Chromosome I"/>
</dbReference>
<dbReference type="GO" id="GO:0051285">
    <property type="term" value="C:cell cortex of cell tip"/>
    <property type="evidence" value="ECO:0000314"/>
    <property type="project" value="PomBase"/>
</dbReference>
<dbReference type="GO" id="GO:0032153">
    <property type="term" value="C:cell division site"/>
    <property type="evidence" value="ECO:0007005"/>
    <property type="project" value="PomBase"/>
</dbReference>
<dbReference type="GO" id="GO:0051286">
    <property type="term" value="C:cell tip"/>
    <property type="evidence" value="ECO:0007005"/>
    <property type="project" value="PomBase"/>
</dbReference>
<dbReference type="GO" id="GO:0005794">
    <property type="term" value="C:Golgi apparatus"/>
    <property type="evidence" value="ECO:0007005"/>
    <property type="project" value="PomBase"/>
</dbReference>
<dbReference type="GO" id="GO:0000139">
    <property type="term" value="C:Golgi membrane"/>
    <property type="evidence" value="ECO:0007669"/>
    <property type="project" value="UniProtKB-SubCell"/>
</dbReference>
<dbReference type="GO" id="GO:0005886">
    <property type="term" value="C:plasma membrane"/>
    <property type="evidence" value="ECO:0000318"/>
    <property type="project" value="GO_Central"/>
</dbReference>
<dbReference type="GO" id="GO:0044853">
    <property type="term" value="C:plasma membrane raft"/>
    <property type="evidence" value="ECO:0000266"/>
    <property type="project" value="PomBase"/>
</dbReference>
<dbReference type="GO" id="GO:0031505">
    <property type="term" value="P:fungal-type cell wall organization"/>
    <property type="evidence" value="ECO:0000318"/>
    <property type="project" value="GO_Central"/>
</dbReference>
<dbReference type="FunFam" id="1.20.140.150:FF:000064">
    <property type="entry name" value="Integral membrane protein (AFU_orthologue AFUA_6G07470)"/>
    <property type="match status" value="1"/>
</dbReference>
<dbReference type="Gene3D" id="1.20.140.150">
    <property type="match status" value="1"/>
</dbReference>
<dbReference type="InterPro" id="IPR009571">
    <property type="entry name" value="SUR7/Rim9-like_fungi"/>
</dbReference>
<dbReference type="InterPro" id="IPR052413">
    <property type="entry name" value="SUR7_domain"/>
</dbReference>
<dbReference type="PANTHER" id="PTHR28019">
    <property type="entry name" value="CELL MEMBRANE PROTEIN YLR413W-RELATED"/>
    <property type="match status" value="1"/>
</dbReference>
<dbReference type="PANTHER" id="PTHR28019:SF2">
    <property type="entry name" value="CELL MEMBRANE PROTEIN YLR413W-RELATED"/>
    <property type="match status" value="1"/>
</dbReference>
<dbReference type="Pfam" id="PF06687">
    <property type="entry name" value="SUR7"/>
    <property type="match status" value="1"/>
</dbReference>
<name>PUN1_SCHPO</name>
<comment type="function">
    <text evidence="1">Contributes to the wild-type cellular response to nitrogen stress through signaling pathways that regulate the expression of genes involved in amino acid biosynthesis. Required for wild-type filamentous growth, cell growth, and cell-cell adhesion (By similarity).</text>
</comment>
<comment type="subcellular location">
    <subcellularLocation>
        <location evidence="3">Golgi apparatus membrane</location>
        <topology evidence="3">Multi-pass membrane protein</topology>
    </subcellularLocation>
    <subcellularLocation>
        <location evidence="3">Cell membrane</location>
        <topology evidence="3">Multi-pass membrane protein</topology>
    </subcellularLocation>
    <subcellularLocation>
        <location evidence="3">Cell tip</location>
    </subcellularLocation>
</comment>
<comment type="similarity">
    <text evidence="4">Belongs to the SUR7 family.</text>
</comment>
<sequence length="288" mass="31450">MGMGFNPIKALFTGIGTVCVGVGALLSILCIINQTQHNIAFQNIYFIQLNTTSIFSVANQTAVVNNTSNLLNELTGTLVDTLETYIDQGATDLIEQVEQEMKDVSELPDWYSIGLWNYCQGNSSDYTNPTYCSTPSPSYYFNPLTMLETSINNATGSQINITLPSEVDLGLKVLKGACYAMRAMYILGFIFFALTIVSIVISCLPFFGPLFLNVFSFFATIFTFIAAVIAVATYRIAISELEKNIEILNIPIVLGKKIYAYSFLSAAAGLAACILYFIGNLTSGYSPL</sequence>
<reference key="1">
    <citation type="journal article" date="2002" name="Nature">
        <title>The genome sequence of Schizosaccharomyces pombe.</title>
        <authorList>
            <person name="Wood V."/>
            <person name="Gwilliam R."/>
            <person name="Rajandream M.A."/>
            <person name="Lyne M.H."/>
            <person name="Lyne R."/>
            <person name="Stewart A."/>
            <person name="Sgouros J.G."/>
            <person name="Peat N."/>
            <person name="Hayles J."/>
            <person name="Baker S.G."/>
            <person name="Basham D."/>
            <person name="Bowman S."/>
            <person name="Brooks K."/>
            <person name="Brown D."/>
            <person name="Brown S."/>
            <person name="Chillingworth T."/>
            <person name="Churcher C.M."/>
            <person name="Collins M."/>
            <person name="Connor R."/>
            <person name="Cronin A."/>
            <person name="Davis P."/>
            <person name="Feltwell T."/>
            <person name="Fraser A."/>
            <person name="Gentles S."/>
            <person name="Goble A."/>
            <person name="Hamlin N."/>
            <person name="Harris D.E."/>
            <person name="Hidalgo J."/>
            <person name="Hodgson G."/>
            <person name="Holroyd S."/>
            <person name="Hornsby T."/>
            <person name="Howarth S."/>
            <person name="Huckle E.J."/>
            <person name="Hunt S."/>
            <person name="Jagels K."/>
            <person name="James K.D."/>
            <person name="Jones L."/>
            <person name="Jones M."/>
            <person name="Leather S."/>
            <person name="McDonald S."/>
            <person name="McLean J."/>
            <person name="Mooney P."/>
            <person name="Moule S."/>
            <person name="Mungall K.L."/>
            <person name="Murphy L.D."/>
            <person name="Niblett D."/>
            <person name="Odell C."/>
            <person name="Oliver K."/>
            <person name="O'Neil S."/>
            <person name="Pearson D."/>
            <person name="Quail M.A."/>
            <person name="Rabbinowitsch E."/>
            <person name="Rutherford K.M."/>
            <person name="Rutter S."/>
            <person name="Saunders D."/>
            <person name="Seeger K."/>
            <person name="Sharp S."/>
            <person name="Skelton J."/>
            <person name="Simmonds M.N."/>
            <person name="Squares R."/>
            <person name="Squares S."/>
            <person name="Stevens K."/>
            <person name="Taylor K."/>
            <person name="Taylor R.G."/>
            <person name="Tivey A."/>
            <person name="Walsh S.V."/>
            <person name="Warren T."/>
            <person name="Whitehead S."/>
            <person name="Woodward J.R."/>
            <person name="Volckaert G."/>
            <person name="Aert R."/>
            <person name="Robben J."/>
            <person name="Grymonprez B."/>
            <person name="Weltjens I."/>
            <person name="Vanstreels E."/>
            <person name="Rieger M."/>
            <person name="Schaefer M."/>
            <person name="Mueller-Auer S."/>
            <person name="Gabel C."/>
            <person name="Fuchs M."/>
            <person name="Duesterhoeft A."/>
            <person name="Fritzc C."/>
            <person name="Holzer E."/>
            <person name="Moestl D."/>
            <person name="Hilbert H."/>
            <person name="Borzym K."/>
            <person name="Langer I."/>
            <person name="Beck A."/>
            <person name="Lehrach H."/>
            <person name="Reinhardt R."/>
            <person name="Pohl T.M."/>
            <person name="Eger P."/>
            <person name="Zimmermann W."/>
            <person name="Wedler H."/>
            <person name="Wambutt R."/>
            <person name="Purnelle B."/>
            <person name="Goffeau A."/>
            <person name="Cadieu E."/>
            <person name="Dreano S."/>
            <person name="Gloux S."/>
            <person name="Lelaure V."/>
            <person name="Mottier S."/>
            <person name="Galibert F."/>
            <person name="Aves S.J."/>
            <person name="Xiang Z."/>
            <person name="Hunt C."/>
            <person name="Moore K."/>
            <person name="Hurst S.M."/>
            <person name="Lucas M."/>
            <person name="Rochet M."/>
            <person name="Gaillardin C."/>
            <person name="Tallada V.A."/>
            <person name="Garzon A."/>
            <person name="Thode G."/>
            <person name="Daga R.R."/>
            <person name="Cruzado L."/>
            <person name="Jimenez J."/>
            <person name="Sanchez M."/>
            <person name="del Rey F."/>
            <person name="Benito J."/>
            <person name="Dominguez A."/>
            <person name="Revuelta J.L."/>
            <person name="Moreno S."/>
            <person name="Armstrong J."/>
            <person name="Forsburg S.L."/>
            <person name="Cerutti L."/>
            <person name="Lowe T."/>
            <person name="McCombie W.R."/>
            <person name="Paulsen I."/>
            <person name="Potashkin J."/>
            <person name="Shpakovski G.V."/>
            <person name="Ussery D."/>
            <person name="Barrell B.G."/>
            <person name="Nurse P."/>
        </authorList>
    </citation>
    <scope>NUCLEOTIDE SEQUENCE [LARGE SCALE GENOMIC DNA]</scope>
    <source>
        <strain>972 / ATCC 24843</strain>
    </source>
</reference>
<reference key="2">
    <citation type="journal article" date="2006" name="Nat. Biotechnol.">
        <title>ORFeome cloning and global analysis of protein localization in the fission yeast Schizosaccharomyces pombe.</title>
        <authorList>
            <person name="Matsuyama A."/>
            <person name="Arai R."/>
            <person name="Yashiroda Y."/>
            <person name="Shirai A."/>
            <person name="Kamata A."/>
            <person name="Sekido S."/>
            <person name="Kobayashi Y."/>
            <person name="Hashimoto A."/>
            <person name="Hamamoto M."/>
            <person name="Hiraoka Y."/>
            <person name="Horinouchi S."/>
            <person name="Yoshida M."/>
        </authorList>
    </citation>
    <scope>SUBCELLULAR LOCATION [LARGE SCALE ANALYSIS]</scope>
</reference>
<accession>O13729</accession>
<protein>
    <recommendedName>
        <fullName>SUR7 family protein pun1</fullName>
    </recommendedName>
</protein>
<feature type="chain" id="PRO_0000116645" description="SUR7 family protein pun1">
    <location>
        <begin position="1"/>
        <end position="288"/>
    </location>
</feature>
<feature type="topological domain" description="Cytoplasmic" evidence="2">
    <location>
        <begin position="1"/>
        <end position="11"/>
    </location>
</feature>
<feature type="transmembrane region" description="Helical" evidence="2">
    <location>
        <begin position="12"/>
        <end position="32"/>
    </location>
</feature>
<feature type="topological domain" description="Extracellular" evidence="2">
    <location>
        <begin position="33"/>
        <end position="185"/>
    </location>
</feature>
<feature type="transmembrane region" description="Helical" evidence="2">
    <location>
        <begin position="186"/>
        <end position="206"/>
    </location>
</feature>
<feature type="topological domain" description="Cytoplasmic" evidence="2">
    <location>
        <begin position="207"/>
        <end position="210"/>
    </location>
</feature>
<feature type="transmembrane region" description="Helical" evidence="2">
    <location>
        <begin position="211"/>
        <end position="231"/>
    </location>
</feature>
<feature type="topological domain" description="Extracellular" evidence="2">
    <location>
        <begin position="232"/>
        <end position="257"/>
    </location>
</feature>
<feature type="transmembrane region" description="Helical" evidence="2">
    <location>
        <begin position="258"/>
        <end position="278"/>
    </location>
</feature>
<feature type="topological domain" description="Cytoplasmic" evidence="2">
    <location>
        <begin position="279"/>
        <end position="288"/>
    </location>
</feature>
<feature type="glycosylation site" description="N-linked (GlcNAc...) asparagine" evidence="2">
    <location>
        <position position="33"/>
    </location>
</feature>
<feature type="glycosylation site" description="N-linked (GlcNAc...) asparagine" evidence="2">
    <location>
        <position position="50"/>
    </location>
</feature>
<feature type="glycosylation site" description="N-linked (GlcNAc...) asparagine" evidence="2">
    <location>
        <position position="59"/>
    </location>
</feature>
<feature type="glycosylation site" description="N-linked (GlcNAc...) asparagine" evidence="2">
    <location>
        <position position="66"/>
    </location>
</feature>
<feature type="glycosylation site" description="N-linked (GlcNAc...) asparagine" evidence="2">
    <location>
        <position position="122"/>
    </location>
</feature>
<feature type="glycosylation site" description="N-linked (GlcNAc...) asparagine" evidence="2">
    <location>
        <position position="153"/>
    </location>
</feature>
<feature type="glycosylation site" description="N-linked (GlcNAc...) asparagine" evidence="2">
    <location>
        <position position="160"/>
    </location>
</feature>